<reference key="1">
    <citation type="journal article" date="2006" name="Proc. Natl. Acad. Sci. U.S.A.">
        <title>Genome reduction in Leptospira borgpetersenii reflects limited transmission potential.</title>
        <authorList>
            <person name="Bulach D.M."/>
            <person name="Zuerner R.L."/>
            <person name="Wilson P."/>
            <person name="Seemann T."/>
            <person name="McGrath A."/>
            <person name="Cullen P.A."/>
            <person name="Davis J."/>
            <person name="Johnson M."/>
            <person name="Kuczek E."/>
            <person name="Alt D.P."/>
            <person name="Peterson-Burch B."/>
            <person name="Coppel R.L."/>
            <person name="Rood J.I."/>
            <person name="Davies J.K."/>
            <person name="Adler B."/>
        </authorList>
    </citation>
    <scope>NUCLEOTIDE SEQUENCE [LARGE SCALE GENOMIC DNA]</scope>
    <source>
        <strain>L550</strain>
    </source>
</reference>
<name>RF1_LEPBL</name>
<keyword id="KW-0963">Cytoplasm</keyword>
<keyword id="KW-0488">Methylation</keyword>
<keyword id="KW-0648">Protein biosynthesis</keyword>
<gene>
    <name evidence="1" type="primary">prfA</name>
    <name type="ordered locus">LBL_0042</name>
</gene>
<organism>
    <name type="scientific">Leptospira borgpetersenii serovar Hardjo-bovis (strain L550)</name>
    <dbReference type="NCBI Taxonomy" id="355276"/>
    <lineage>
        <taxon>Bacteria</taxon>
        <taxon>Pseudomonadati</taxon>
        <taxon>Spirochaetota</taxon>
        <taxon>Spirochaetia</taxon>
        <taxon>Leptospirales</taxon>
        <taxon>Leptospiraceae</taxon>
        <taxon>Leptospira</taxon>
    </lineage>
</organism>
<proteinExistence type="inferred from homology"/>
<sequence length="354" mass="39997">MIDRLEKIQEKYLRISEELNSAKDPSSLKSLYKERSRLTPLYLKVEEYLKIYKDKKDAEELIPSEKDEEMHSMLKEEIRRASKKLEELEKELEILLLTPDPNSGKNILVEIRAGTGGEEAGLFVADLFRMYSKFADKQKIKSEIIDSAPTGIGGLKEIIFALEDERAYDLFKFEGGTHRVQRIPSTESGGRIHTSAVTVAVLPEADEEEIEINENDLRIDVYRSSGAGGQHVNTTDSAVRITHIPTGVVVACQDEKSQHKNKAKALRILSARILEKQTEDKKQASDAIKKQMIGSGDRSERVRTYNFPQGRCTDHRIGFTSHNLSAIMEGDLEELIGALTEEDRARKISETQVH</sequence>
<feature type="chain" id="PRO_1000004908" description="Peptide chain release factor 1">
    <location>
        <begin position="1"/>
        <end position="354"/>
    </location>
</feature>
<feature type="region of interest" description="Disordered" evidence="2">
    <location>
        <begin position="282"/>
        <end position="301"/>
    </location>
</feature>
<feature type="modified residue" description="N5-methylglutamine" evidence="1">
    <location>
        <position position="230"/>
    </location>
</feature>
<accession>Q056R9</accession>
<dbReference type="EMBL" id="CP000348">
    <property type="protein sequence ID" value="ABJ77676.1"/>
    <property type="molecule type" value="Genomic_DNA"/>
</dbReference>
<dbReference type="RefSeq" id="WP_011669162.1">
    <property type="nucleotide sequence ID" value="NC_008508.1"/>
</dbReference>
<dbReference type="SMR" id="Q056R9"/>
<dbReference type="KEGG" id="lbl:LBL_0042"/>
<dbReference type="HOGENOM" id="CLU_036856_0_1_12"/>
<dbReference type="GO" id="GO:0005737">
    <property type="term" value="C:cytoplasm"/>
    <property type="evidence" value="ECO:0007669"/>
    <property type="project" value="UniProtKB-SubCell"/>
</dbReference>
<dbReference type="GO" id="GO:0016149">
    <property type="term" value="F:translation release factor activity, codon specific"/>
    <property type="evidence" value="ECO:0007669"/>
    <property type="project" value="UniProtKB-UniRule"/>
</dbReference>
<dbReference type="FunFam" id="3.30.160.20:FF:000004">
    <property type="entry name" value="Peptide chain release factor 1"/>
    <property type="match status" value="1"/>
</dbReference>
<dbReference type="FunFam" id="3.30.70.1660:FF:000002">
    <property type="entry name" value="Peptide chain release factor 1"/>
    <property type="match status" value="1"/>
</dbReference>
<dbReference type="Gene3D" id="3.30.160.20">
    <property type="match status" value="1"/>
</dbReference>
<dbReference type="Gene3D" id="3.30.70.1660">
    <property type="match status" value="1"/>
</dbReference>
<dbReference type="Gene3D" id="6.10.140.1950">
    <property type="match status" value="1"/>
</dbReference>
<dbReference type="HAMAP" id="MF_00093">
    <property type="entry name" value="Rel_fac_1"/>
    <property type="match status" value="1"/>
</dbReference>
<dbReference type="InterPro" id="IPR005139">
    <property type="entry name" value="PCRF"/>
</dbReference>
<dbReference type="InterPro" id="IPR000352">
    <property type="entry name" value="Pep_chain_release_fac_I"/>
</dbReference>
<dbReference type="InterPro" id="IPR045853">
    <property type="entry name" value="Pep_chain_release_fac_I_sf"/>
</dbReference>
<dbReference type="InterPro" id="IPR050057">
    <property type="entry name" value="Prokaryotic/Mito_RF"/>
</dbReference>
<dbReference type="InterPro" id="IPR004373">
    <property type="entry name" value="RF-1"/>
</dbReference>
<dbReference type="NCBIfam" id="TIGR00019">
    <property type="entry name" value="prfA"/>
    <property type="match status" value="1"/>
</dbReference>
<dbReference type="NCBIfam" id="NF001859">
    <property type="entry name" value="PRK00591.1"/>
    <property type="match status" value="1"/>
</dbReference>
<dbReference type="PANTHER" id="PTHR43804">
    <property type="entry name" value="LD18447P"/>
    <property type="match status" value="1"/>
</dbReference>
<dbReference type="PANTHER" id="PTHR43804:SF7">
    <property type="entry name" value="LD18447P"/>
    <property type="match status" value="1"/>
</dbReference>
<dbReference type="Pfam" id="PF03462">
    <property type="entry name" value="PCRF"/>
    <property type="match status" value="1"/>
</dbReference>
<dbReference type="Pfam" id="PF00472">
    <property type="entry name" value="RF-1"/>
    <property type="match status" value="1"/>
</dbReference>
<dbReference type="SMART" id="SM00937">
    <property type="entry name" value="PCRF"/>
    <property type="match status" value="1"/>
</dbReference>
<dbReference type="SUPFAM" id="SSF75620">
    <property type="entry name" value="Release factor"/>
    <property type="match status" value="1"/>
</dbReference>
<dbReference type="PROSITE" id="PS00745">
    <property type="entry name" value="RF_PROK_I"/>
    <property type="match status" value="1"/>
</dbReference>
<evidence type="ECO:0000255" key="1">
    <source>
        <dbReference type="HAMAP-Rule" id="MF_00093"/>
    </source>
</evidence>
<evidence type="ECO:0000256" key="2">
    <source>
        <dbReference type="SAM" id="MobiDB-lite"/>
    </source>
</evidence>
<comment type="function">
    <text evidence="1">Peptide chain release factor 1 directs the termination of translation in response to the peptide chain termination codons UAG and UAA.</text>
</comment>
<comment type="subcellular location">
    <subcellularLocation>
        <location evidence="1">Cytoplasm</location>
    </subcellularLocation>
</comment>
<comment type="PTM">
    <text evidence="1">Methylated by PrmC. Methylation increases the termination efficiency of RF1.</text>
</comment>
<comment type="similarity">
    <text evidence="1">Belongs to the prokaryotic/mitochondrial release factor family.</text>
</comment>
<protein>
    <recommendedName>
        <fullName evidence="1">Peptide chain release factor 1</fullName>
        <shortName evidence="1">RF-1</shortName>
    </recommendedName>
</protein>